<keyword id="KW-0963">Cytoplasm</keyword>
<keyword id="KW-1185">Reference proteome</keyword>
<sequence length="336" mass="37995">MSLDIAQIALHQLIKRDEQTLDMVLRDSLLPTNAAVEDMMAELHRVYSAKSKAYGLFNEQSELADALRACRKGDEDFLSFSRAATGRLRDELAKYPFAEGGIVLFCQYRYLAVEYLLISVLNSCNSMRVNEQLDISTTHYLDINHADIIARIDLTEWETNPESTRYLTFLKGRVGRKVSDFFMDFLAASEGLDTKAQNRGLLKAVDEYCDEAQLDKNERQNYRQQVHSYCTEQLQSGEEIELASLSQELPPLGEKTFQQFSADQGYELEESFPADRGTLRQLTKFAGSGGGISLNFDALLLGERIFWDPATDTLTIKGTPPNLRDQLQRRTSGGKQ</sequence>
<accession>Q6D3J7</accession>
<feature type="initiator methionine" description="Removed" evidence="1">
    <location>
        <position position="1"/>
    </location>
</feature>
<feature type="chain" id="PRO_0000210907" description="Nucleoid-associated protein ECA2747">
    <location>
        <begin position="2"/>
        <end position="336"/>
    </location>
</feature>
<feature type="region of interest" description="Disordered" evidence="3">
    <location>
        <begin position="317"/>
        <end position="336"/>
    </location>
</feature>
<gene>
    <name type="ordered locus">ECA2747</name>
</gene>
<protein>
    <recommendedName>
        <fullName evidence="2">Nucleoid-associated protein ECA2747</fullName>
    </recommendedName>
</protein>
<dbReference type="EMBL" id="BX950851">
    <property type="protein sequence ID" value="CAG75647.1"/>
    <property type="molecule type" value="Genomic_DNA"/>
</dbReference>
<dbReference type="SMR" id="Q6D3J7"/>
<dbReference type="STRING" id="218491.ECA2747"/>
<dbReference type="KEGG" id="eca:ECA2747"/>
<dbReference type="PATRIC" id="fig|218491.5.peg.2784"/>
<dbReference type="eggNOG" id="COG3081">
    <property type="taxonomic scope" value="Bacteria"/>
</dbReference>
<dbReference type="HOGENOM" id="CLU_063050_0_1_6"/>
<dbReference type="OrthoDB" id="9131762at2"/>
<dbReference type="Proteomes" id="UP000007966">
    <property type="component" value="Chromosome"/>
</dbReference>
<dbReference type="GO" id="GO:0043590">
    <property type="term" value="C:bacterial nucleoid"/>
    <property type="evidence" value="ECO:0007669"/>
    <property type="project" value="TreeGrafter"/>
</dbReference>
<dbReference type="GO" id="GO:0005737">
    <property type="term" value="C:cytoplasm"/>
    <property type="evidence" value="ECO:0007669"/>
    <property type="project" value="UniProtKB-UniRule"/>
</dbReference>
<dbReference type="GO" id="GO:0003690">
    <property type="term" value="F:double-stranded DNA binding"/>
    <property type="evidence" value="ECO:0007669"/>
    <property type="project" value="TreeGrafter"/>
</dbReference>
<dbReference type="GO" id="GO:0003727">
    <property type="term" value="F:single-stranded RNA binding"/>
    <property type="evidence" value="ECO:0007669"/>
    <property type="project" value="TreeGrafter"/>
</dbReference>
<dbReference type="HAMAP" id="MF_00730">
    <property type="entry name" value="NdpA"/>
    <property type="match status" value="1"/>
</dbReference>
<dbReference type="InterPro" id="IPR007358">
    <property type="entry name" value="Nucleoid_associated_NdpA"/>
</dbReference>
<dbReference type="NCBIfam" id="NF001557">
    <property type="entry name" value="PRK00378.1"/>
    <property type="match status" value="1"/>
</dbReference>
<dbReference type="PANTHER" id="PTHR38772">
    <property type="match status" value="1"/>
</dbReference>
<dbReference type="PANTHER" id="PTHR38772:SF1">
    <property type="entry name" value="NUCLEOID-ASSOCIATED PROTEIN YEJK"/>
    <property type="match status" value="1"/>
</dbReference>
<dbReference type="Pfam" id="PF04245">
    <property type="entry name" value="NA37"/>
    <property type="match status" value="1"/>
</dbReference>
<proteinExistence type="inferred from homology"/>
<reference key="1">
    <citation type="journal article" date="2004" name="Proc. Natl. Acad. Sci. U.S.A.">
        <title>Genome sequence of the enterobacterial phytopathogen Erwinia carotovora subsp. atroseptica and characterization of virulence factors.</title>
        <authorList>
            <person name="Bell K.S."/>
            <person name="Sebaihia M."/>
            <person name="Pritchard L."/>
            <person name="Holden M.T.G."/>
            <person name="Hyman L.J."/>
            <person name="Holeva M.C."/>
            <person name="Thomson N.R."/>
            <person name="Bentley S.D."/>
            <person name="Churcher L.J.C."/>
            <person name="Mungall K."/>
            <person name="Atkin R."/>
            <person name="Bason N."/>
            <person name="Brooks K."/>
            <person name="Chillingworth T."/>
            <person name="Clark K."/>
            <person name="Doggett J."/>
            <person name="Fraser A."/>
            <person name="Hance Z."/>
            <person name="Hauser H."/>
            <person name="Jagels K."/>
            <person name="Moule S."/>
            <person name="Norbertczak H."/>
            <person name="Ormond D."/>
            <person name="Price C."/>
            <person name="Quail M.A."/>
            <person name="Sanders M."/>
            <person name="Walker D."/>
            <person name="Whitehead S."/>
            <person name="Salmond G.P.C."/>
            <person name="Birch P.R.J."/>
            <person name="Parkhill J."/>
            <person name="Toth I.K."/>
        </authorList>
    </citation>
    <scope>NUCLEOTIDE SEQUENCE [LARGE SCALE GENOMIC DNA]</scope>
    <source>
        <strain>SCRI 1043 / ATCC BAA-672</strain>
    </source>
</reference>
<name>NDPA_PECAS</name>
<comment type="subcellular location">
    <subcellularLocation>
        <location evidence="2">Cytoplasm</location>
        <location evidence="2">Nucleoid</location>
    </subcellularLocation>
</comment>
<comment type="similarity">
    <text evidence="2">Belongs to the YejK family.</text>
</comment>
<evidence type="ECO:0000250" key="1"/>
<evidence type="ECO:0000255" key="2">
    <source>
        <dbReference type="HAMAP-Rule" id="MF_00730"/>
    </source>
</evidence>
<evidence type="ECO:0000256" key="3">
    <source>
        <dbReference type="SAM" id="MobiDB-lite"/>
    </source>
</evidence>
<organism>
    <name type="scientific">Pectobacterium atrosepticum (strain SCRI 1043 / ATCC BAA-672)</name>
    <name type="common">Erwinia carotovora subsp. atroseptica</name>
    <dbReference type="NCBI Taxonomy" id="218491"/>
    <lineage>
        <taxon>Bacteria</taxon>
        <taxon>Pseudomonadati</taxon>
        <taxon>Pseudomonadota</taxon>
        <taxon>Gammaproteobacteria</taxon>
        <taxon>Enterobacterales</taxon>
        <taxon>Pectobacteriaceae</taxon>
        <taxon>Pectobacterium</taxon>
    </lineage>
</organism>